<dbReference type="EMBL" id="BC045967">
    <property type="protein sequence ID" value="AAH45967.1"/>
    <property type="molecule type" value="mRNA"/>
</dbReference>
<dbReference type="EMBL" id="BC067338">
    <property type="protein sequence ID" value="AAH67338.1"/>
    <property type="molecule type" value="mRNA"/>
</dbReference>
<dbReference type="RefSeq" id="NP_997766.1">
    <property type="nucleotide sequence ID" value="NM_212601.2"/>
</dbReference>
<dbReference type="SMR" id="Q7ZV80"/>
<dbReference type="FunCoup" id="Q7ZV80">
    <property type="interactions" value="2497"/>
</dbReference>
<dbReference type="STRING" id="7955.ENSDARP00000038215"/>
<dbReference type="PaxDb" id="7955-ENSDARP00000038215"/>
<dbReference type="Ensembl" id="ENSDART00000031547">
    <property type="protein sequence ID" value="ENSDARP00000038215"/>
    <property type="gene ID" value="ENSDARG00000056235"/>
</dbReference>
<dbReference type="Ensembl" id="ENSDART00000180115">
    <property type="protein sequence ID" value="ENSDARP00000146987"/>
    <property type="gene ID" value="ENSDARG00000056235"/>
</dbReference>
<dbReference type="Ensembl" id="ENSDART00000193732">
    <property type="protein sequence ID" value="ENSDARP00000147770"/>
    <property type="gene ID" value="ENSDARG00000117084"/>
</dbReference>
<dbReference type="GeneID" id="572679"/>
<dbReference type="KEGG" id="dre:572679"/>
<dbReference type="AGR" id="ZFIN:ZDB-GENE-030131-614"/>
<dbReference type="CTD" id="10285"/>
<dbReference type="ZFIN" id="ZDB-GENE-030131-614">
    <property type="gene designation" value="smndc1"/>
</dbReference>
<dbReference type="eggNOG" id="KOG3026">
    <property type="taxonomic scope" value="Eukaryota"/>
</dbReference>
<dbReference type="HOGENOM" id="CLU_069491_3_0_1"/>
<dbReference type="InParanoid" id="Q7ZV80"/>
<dbReference type="OMA" id="CMAVWSQ"/>
<dbReference type="OrthoDB" id="79171at2759"/>
<dbReference type="PhylomeDB" id="Q7ZV80"/>
<dbReference type="TreeFam" id="TF315413"/>
<dbReference type="Reactome" id="R-DRE-72163">
    <property type="pathway name" value="mRNA Splicing - Major Pathway"/>
</dbReference>
<dbReference type="PRO" id="PR:Q7ZV80"/>
<dbReference type="Proteomes" id="UP000000437">
    <property type="component" value="Alternate scaffold 17"/>
</dbReference>
<dbReference type="Proteomes" id="UP000000437">
    <property type="component" value="Chromosome 17"/>
</dbReference>
<dbReference type="Bgee" id="ENSDARG00000056235">
    <property type="expression patterns" value="Expressed in mature ovarian follicle and 27 other cell types or tissues"/>
</dbReference>
<dbReference type="ExpressionAtlas" id="Q7ZV80">
    <property type="expression patterns" value="baseline and differential"/>
</dbReference>
<dbReference type="GO" id="GO:0015030">
    <property type="term" value="C:Cajal body"/>
    <property type="evidence" value="ECO:0007669"/>
    <property type="project" value="UniProtKB-SubCell"/>
</dbReference>
<dbReference type="GO" id="GO:0005737">
    <property type="term" value="C:cytoplasm"/>
    <property type="evidence" value="ECO:0007669"/>
    <property type="project" value="InterPro"/>
</dbReference>
<dbReference type="GO" id="GO:0016607">
    <property type="term" value="C:nuclear speck"/>
    <property type="evidence" value="ECO:0007669"/>
    <property type="project" value="UniProtKB-SubCell"/>
</dbReference>
<dbReference type="GO" id="GO:0005634">
    <property type="term" value="C:nucleus"/>
    <property type="evidence" value="ECO:0000318"/>
    <property type="project" value="GO_Central"/>
</dbReference>
<dbReference type="GO" id="GO:0005681">
    <property type="term" value="C:spliceosomal complex"/>
    <property type="evidence" value="ECO:0007669"/>
    <property type="project" value="UniProtKB-KW"/>
</dbReference>
<dbReference type="GO" id="GO:0003723">
    <property type="term" value="F:RNA binding"/>
    <property type="evidence" value="ECO:0007669"/>
    <property type="project" value="InterPro"/>
</dbReference>
<dbReference type="GO" id="GO:0006397">
    <property type="term" value="P:mRNA processing"/>
    <property type="evidence" value="ECO:0007669"/>
    <property type="project" value="UniProtKB-KW"/>
</dbReference>
<dbReference type="GO" id="GO:0008380">
    <property type="term" value="P:RNA splicing"/>
    <property type="evidence" value="ECO:0007669"/>
    <property type="project" value="UniProtKB-KW"/>
</dbReference>
<dbReference type="CDD" id="cd20399">
    <property type="entry name" value="Tudor_SPF30"/>
    <property type="match status" value="1"/>
</dbReference>
<dbReference type="Gene3D" id="2.30.30.140">
    <property type="match status" value="1"/>
</dbReference>
<dbReference type="InterPro" id="IPR010304">
    <property type="entry name" value="SMN_Tudor"/>
</dbReference>
<dbReference type="InterPro" id="IPR002999">
    <property type="entry name" value="Tudor"/>
</dbReference>
<dbReference type="PANTHER" id="PTHR13681:SF26">
    <property type="entry name" value="SURVIVAL OF MOTOR NEURON-RELATED-SPLICING FACTOR 30"/>
    <property type="match status" value="1"/>
</dbReference>
<dbReference type="PANTHER" id="PTHR13681">
    <property type="entry name" value="SURVIVAL OF MOTOR NEURON-RELATED-SPLICING FACTOR 30-RELATED"/>
    <property type="match status" value="1"/>
</dbReference>
<dbReference type="Pfam" id="PF06003">
    <property type="entry name" value="SMN_Tudor"/>
    <property type="match status" value="1"/>
</dbReference>
<dbReference type="SMART" id="SM00333">
    <property type="entry name" value="TUDOR"/>
    <property type="match status" value="1"/>
</dbReference>
<dbReference type="SUPFAM" id="SSF63748">
    <property type="entry name" value="Tudor/PWWP/MBT"/>
    <property type="match status" value="1"/>
</dbReference>
<dbReference type="PROSITE" id="PS50304">
    <property type="entry name" value="TUDOR"/>
    <property type="match status" value="1"/>
</dbReference>
<proteinExistence type="evidence at transcript level"/>
<keyword id="KW-0507">mRNA processing</keyword>
<keyword id="KW-0508">mRNA splicing</keyword>
<keyword id="KW-0539">Nucleus</keyword>
<keyword id="KW-1185">Reference proteome</keyword>
<keyword id="KW-0747">Spliceosome</keyword>
<evidence type="ECO:0000250" key="1">
    <source>
        <dbReference type="UniProtKB" id="O75940"/>
    </source>
</evidence>
<evidence type="ECO:0000255" key="2"/>
<evidence type="ECO:0000255" key="3">
    <source>
        <dbReference type="PROSITE-ProRule" id="PRU00211"/>
    </source>
</evidence>
<evidence type="ECO:0000256" key="4">
    <source>
        <dbReference type="SAM" id="MobiDB-lite"/>
    </source>
</evidence>
<evidence type="ECO:0000305" key="5"/>
<protein>
    <recommendedName>
        <fullName>Survival of motor neuron-related-splicing factor 30</fullName>
    </recommendedName>
    <alternativeName>
        <fullName>Survival motor neuron domain-containing protein 1</fullName>
    </alternativeName>
</protein>
<reference key="1">
    <citation type="submission" date="2004-03" db="EMBL/GenBank/DDBJ databases">
        <authorList>
            <consortium name="NIH - Zebrafish Gene Collection (ZGC) project"/>
        </authorList>
    </citation>
    <scope>NUCLEOTIDE SEQUENCE [LARGE SCALE MRNA]</scope>
</reference>
<organism>
    <name type="scientific">Danio rerio</name>
    <name type="common">Zebrafish</name>
    <name type="synonym">Brachydanio rerio</name>
    <dbReference type="NCBI Taxonomy" id="7955"/>
    <lineage>
        <taxon>Eukaryota</taxon>
        <taxon>Metazoa</taxon>
        <taxon>Chordata</taxon>
        <taxon>Craniata</taxon>
        <taxon>Vertebrata</taxon>
        <taxon>Euteleostomi</taxon>
        <taxon>Actinopterygii</taxon>
        <taxon>Neopterygii</taxon>
        <taxon>Teleostei</taxon>
        <taxon>Ostariophysi</taxon>
        <taxon>Cypriniformes</taxon>
        <taxon>Danionidae</taxon>
        <taxon>Danioninae</taxon>
        <taxon>Danio</taxon>
    </lineage>
</organism>
<name>SPF30_DANRE</name>
<sequence>MSEELMKQLSNYKAQLQQVEAALSIDPDNEDLLKLQKDLQEVIELTKDLLTSQPAEGTTSTKSSETVAPSHSWRVGDHCMATWSQDGQVYEAEIEEIDNENGTAAITFAGYGNAEVMPLHMLKKVEEGRIRDEIDGKPKSKKELQAEQREYKKKKAQKKVQRMKELEQEREDQKSKWQQFNNKAYSKNKKGQVKRSIFASPESVNGKVGVGTCGIADKPMTQYNDTSKYNVRHLMPQ</sequence>
<gene>
    <name type="primary">smndc1</name>
    <name type="synonym">spf30</name>
</gene>
<comment type="function">
    <text evidence="1">Involved in spliceosome assembly (By similarity).</text>
</comment>
<comment type="subunit">
    <text evidence="1">Associates with spliceosomes.</text>
</comment>
<comment type="subcellular location">
    <subcellularLocation>
        <location evidence="1">Nucleus speckle</location>
    </subcellularLocation>
    <subcellularLocation>
        <location evidence="1">Nucleus</location>
        <location evidence="1">Cajal body</location>
    </subcellularLocation>
    <text evidence="1">Detected in nuclear speckles containing snRNP and in Cajal (coiled) bodies.</text>
</comment>
<comment type="domain">
    <text evidence="1">The Tudor domain mediates association with dimethylarginines, which are common in snRNP proteins.</text>
</comment>
<comment type="similarity">
    <text evidence="5">Belongs to the SMN family.</text>
</comment>
<feature type="chain" id="PRO_0000347225" description="Survival of motor neuron-related-splicing factor 30">
    <location>
        <begin position="1"/>
        <end position="237"/>
    </location>
</feature>
<feature type="domain" description="Tudor" evidence="3">
    <location>
        <begin position="72"/>
        <end position="132"/>
    </location>
</feature>
<feature type="region of interest" description="Disordered" evidence="4">
    <location>
        <begin position="52"/>
        <end position="73"/>
    </location>
</feature>
<feature type="region of interest" description="Disordered" evidence="4">
    <location>
        <begin position="149"/>
        <end position="198"/>
    </location>
</feature>
<feature type="short sequence motif" description="Nuclear localization signal" evidence="2">
    <location>
        <begin position="142"/>
        <end position="160"/>
    </location>
</feature>
<feature type="compositionally biased region" description="Polar residues" evidence="4">
    <location>
        <begin position="52"/>
        <end position="69"/>
    </location>
</feature>
<feature type="compositionally biased region" description="Basic residues" evidence="4">
    <location>
        <begin position="151"/>
        <end position="161"/>
    </location>
</feature>
<feature type="compositionally biased region" description="Basic and acidic residues" evidence="4">
    <location>
        <begin position="162"/>
        <end position="175"/>
    </location>
</feature>
<feature type="compositionally biased region" description="Polar residues" evidence="4">
    <location>
        <begin position="176"/>
        <end position="185"/>
    </location>
</feature>
<accession>Q7ZV80</accession>